<reference key="1">
    <citation type="journal article" date="1998" name="Nature">
        <title>Deciphering the biology of Mycobacterium tuberculosis from the complete genome sequence.</title>
        <authorList>
            <person name="Cole S.T."/>
            <person name="Brosch R."/>
            <person name="Parkhill J."/>
            <person name="Garnier T."/>
            <person name="Churcher C.M."/>
            <person name="Harris D.E."/>
            <person name="Gordon S.V."/>
            <person name="Eiglmeier K."/>
            <person name="Gas S."/>
            <person name="Barry C.E. III"/>
            <person name="Tekaia F."/>
            <person name="Badcock K."/>
            <person name="Basham D."/>
            <person name="Brown D."/>
            <person name="Chillingworth T."/>
            <person name="Connor R."/>
            <person name="Davies R.M."/>
            <person name="Devlin K."/>
            <person name="Feltwell T."/>
            <person name="Gentles S."/>
            <person name="Hamlin N."/>
            <person name="Holroyd S."/>
            <person name="Hornsby T."/>
            <person name="Jagels K."/>
            <person name="Krogh A."/>
            <person name="McLean J."/>
            <person name="Moule S."/>
            <person name="Murphy L.D."/>
            <person name="Oliver S."/>
            <person name="Osborne J."/>
            <person name="Quail M.A."/>
            <person name="Rajandream M.A."/>
            <person name="Rogers J."/>
            <person name="Rutter S."/>
            <person name="Seeger K."/>
            <person name="Skelton S."/>
            <person name="Squares S."/>
            <person name="Squares R."/>
            <person name="Sulston J.E."/>
            <person name="Taylor K."/>
            <person name="Whitehead S."/>
            <person name="Barrell B.G."/>
        </authorList>
    </citation>
    <scope>NUCLEOTIDE SEQUENCE [LARGE SCALE GENOMIC DNA]</scope>
    <source>
        <strain>ATCC 25618 / H37Rv</strain>
    </source>
</reference>
<reference key="2">
    <citation type="journal article" date="2011" name="Mol. Cell. Proteomics">
        <title>Proteogenomic analysis of Mycobacterium tuberculosis by high resolution mass spectrometry.</title>
        <authorList>
            <person name="Kelkar D.S."/>
            <person name="Kumar D."/>
            <person name="Kumar P."/>
            <person name="Balakrishnan L."/>
            <person name="Muthusamy B."/>
            <person name="Yadav A.K."/>
            <person name="Shrivastava P."/>
            <person name="Marimuthu A."/>
            <person name="Anand S."/>
            <person name="Sundaram H."/>
            <person name="Kingsbury R."/>
            <person name="Harsha H.C."/>
            <person name="Nair B."/>
            <person name="Prasad T.S."/>
            <person name="Chauhan D.S."/>
            <person name="Katoch K."/>
            <person name="Katoch V.M."/>
            <person name="Kumar P."/>
            <person name="Chaerkady R."/>
            <person name="Ramachandran S."/>
            <person name="Dash D."/>
            <person name="Pandey A."/>
        </authorList>
    </citation>
    <scope>IDENTIFICATION BY MASS SPECTROMETRY [LARGE SCALE ANALYSIS]</scope>
    <source>
        <strain>ATCC 25618 / H37Rv</strain>
    </source>
</reference>
<accession>P9WFP9</accession>
<accession>L0TCV5</accession>
<accession>P67121</accession>
<accession>Q50742</accession>
<feature type="chain" id="PRO_0000088520" description="UPF0047 protein Rv2556c">
    <location>
        <begin position="1"/>
        <end position="133"/>
    </location>
</feature>
<proteinExistence type="evidence at protein level"/>
<keyword id="KW-1185">Reference proteome</keyword>
<name>Y2556_MYCTU</name>
<comment type="similarity">
    <text evidence="1">Belongs to the UPF0047 family.</text>
</comment>
<comment type="sequence caution">
    <conflict type="erroneous initiation">
        <sequence resource="EMBL-CDS" id="CCP45352"/>
    </conflict>
    <text>Truncated N-terminus.</text>
</comment>
<organism>
    <name type="scientific">Mycobacterium tuberculosis (strain ATCC 25618 / H37Rv)</name>
    <dbReference type="NCBI Taxonomy" id="83332"/>
    <lineage>
        <taxon>Bacteria</taxon>
        <taxon>Bacillati</taxon>
        <taxon>Actinomycetota</taxon>
        <taxon>Actinomycetes</taxon>
        <taxon>Mycobacteriales</taxon>
        <taxon>Mycobacteriaceae</taxon>
        <taxon>Mycobacterium</taxon>
        <taxon>Mycobacterium tuberculosis complex</taxon>
    </lineage>
</organism>
<dbReference type="EMBL" id="AL123456">
    <property type="protein sequence ID" value="CCP45352.1"/>
    <property type="status" value="ALT_INIT"/>
    <property type="molecule type" value="Genomic_DNA"/>
</dbReference>
<dbReference type="PIR" id="H70727">
    <property type="entry name" value="H70727"/>
</dbReference>
<dbReference type="RefSeq" id="NP_217072.1">
    <property type="nucleotide sequence ID" value="NC_000962.3"/>
</dbReference>
<dbReference type="SMR" id="P9WFP9"/>
<dbReference type="STRING" id="83332.Rv2556c"/>
<dbReference type="PaxDb" id="83332-Rv2556c"/>
<dbReference type="DNASU" id="887451"/>
<dbReference type="GeneID" id="887451"/>
<dbReference type="KEGG" id="mtu:Rv2556c"/>
<dbReference type="PATRIC" id="fig|83332.12.peg.2863"/>
<dbReference type="TubercuList" id="Rv2556c"/>
<dbReference type="eggNOG" id="COG0432">
    <property type="taxonomic scope" value="Bacteria"/>
</dbReference>
<dbReference type="InParanoid" id="P9WFP9"/>
<dbReference type="OrthoDB" id="9801725at2"/>
<dbReference type="Proteomes" id="UP000001584">
    <property type="component" value="Chromosome"/>
</dbReference>
<dbReference type="GO" id="GO:0009274">
    <property type="term" value="C:peptidoglycan-based cell wall"/>
    <property type="evidence" value="ECO:0007005"/>
    <property type="project" value="MTBBASE"/>
</dbReference>
<dbReference type="FunFam" id="2.60.120.460:FF:000001">
    <property type="entry name" value="UPF0047 protein MT2633"/>
    <property type="match status" value="1"/>
</dbReference>
<dbReference type="Gene3D" id="2.60.120.460">
    <property type="entry name" value="YjbQ-like"/>
    <property type="match status" value="1"/>
</dbReference>
<dbReference type="InterPro" id="IPR001602">
    <property type="entry name" value="UPF0047_YjbQ-like"/>
</dbReference>
<dbReference type="InterPro" id="IPR035917">
    <property type="entry name" value="YjbQ-like_sf"/>
</dbReference>
<dbReference type="NCBIfam" id="TIGR00149">
    <property type="entry name" value="TIGR00149_YjbQ"/>
    <property type="match status" value="1"/>
</dbReference>
<dbReference type="PANTHER" id="PTHR30615">
    <property type="entry name" value="UNCHARACTERIZED PROTEIN YJBQ-RELATED"/>
    <property type="match status" value="1"/>
</dbReference>
<dbReference type="PANTHER" id="PTHR30615:SF8">
    <property type="entry name" value="UPF0047 PROTEIN C4A8.02C"/>
    <property type="match status" value="1"/>
</dbReference>
<dbReference type="Pfam" id="PF01894">
    <property type="entry name" value="UPF0047"/>
    <property type="match status" value="1"/>
</dbReference>
<dbReference type="PIRSF" id="PIRSF004681">
    <property type="entry name" value="UCP004681"/>
    <property type="match status" value="1"/>
</dbReference>
<dbReference type="SUPFAM" id="SSF111038">
    <property type="entry name" value="YjbQ-like"/>
    <property type="match status" value="1"/>
</dbReference>
<dbReference type="PROSITE" id="PS01314">
    <property type="entry name" value="UPF0047"/>
    <property type="match status" value="1"/>
</dbReference>
<protein>
    <recommendedName>
        <fullName>UPF0047 protein Rv2556c</fullName>
    </recommendedName>
</protein>
<gene>
    <name type="ordered locus">Rv2556c</name>
    <name type="ORF">MTCY9C4.12</name>
</gene>
<evidence type="ECO:0000305" key="1"/>
<sequence length="133" mass="14355">MDTDVLDVDTARRRIVDLTDAVRAFCTAHDDGLCNVFVPHATAGVAIIETGAGSDEDLVDTLVRLLPRDDRYRHAHGSYGHGADHLLPAFVAPSVTVPVSGGQPLLGTWQSIVLVDLNQDNPRRSVRLSFVEG</sequence>